<comment type="function">
    <text evidence="1">Conjugation of reduced glutathione to a wide number of exogenous and endogenous hydrophobic electrophiles. Has DDT dehydrochlorinase activity (By similarity).</text>
</comment>
<comment type="catalytic activity">
    <reaction>
        <text>RX + glutathione = an S-substituted glutathione + a halide anion + H(+)</text>
        <dbReference type="Rhea" id="RHEA:16437"/>
        <dbReference type="ChEBI" id="CHEBI:15378"/>
        <dbReference type="ChEBI" id="CHEBI:16042"/>
        <dbReference type="ChEBI" id="CHEBI:17792"/>
        <dbReference type="ChEBI" id="CHEBI:57925"/>
        <dbReference type="ChEBI" id="CHEBI:90779"/>
        <dbReference type="EC" id="2.5.1.18"/>
    </reaction>
</comment>
<comment type="catalytic activity">
    <reaction>
        <text>1,1,1-trichloro-2,2-bis(4-chlorophenyl)ethane = 1,1-dichloro-2,2-bis(4-chlorophenyl)ethylene + chloride + H(+)</text>
        <dbReference type="Rhea" id="RHEA:19217"/>
        <dbReference type="ChEBI" id="CHEBI:15378"/>
        <dbReference type="ChEBI" id="CHEBI:16130"/>
        <dbReference type="ChEBI" id="CHEBI:16598"/>
        <dbReference type="ChEBI" id="CHEBI:17996"/>
        <dbReference type="EC" id="4.5.1.1"/>
    </reaction>
</comment>
<comment type="subunit">
    <text>Homodimer.</text>
</comment>
<comment type="similarity">
    <text evidence="2">Belongs to the GST superfamily. Theta family.</text>
</comment>
<evidence type="ECO:0000250" key="1"/>
<evidence type="ECO:0000305" key="2"/>
<feature type="chain" id="PRO_0000185950" description="Glutathione S-transferase 1-1">
    <location>
        <begin position="1"/>
        <end position="209"/>
    </location>
</feature>
<feature type="domain" description="GST N-terminal">
    <location>
        <begin position="1"/>
        <end position="81"/>
    </location>
</feature>
<feature type="domain" description="GST C-terminal">
    <location>
        <begin position="87"/>
        <end position="209"/>
    </location>
</feature>
<feature type="binding site" evidence="1">
    <location>
        <position position="10"/>
    </location>
    <ligand>
        <name>glutathione</name>
        <dbReference type="ChEBI" id="CHEBI:57925"/>
    </ligand>
</feature>
<feature type="binding site" evidence="1">
    <location>
        <begin position="51"/>
        <end position="53"/>
    </location>
    <ligand>
        <name>glutathione</name>
        <dbReference type="ChEBI" id="CHEBI:57925"/>
    </ligand>
</feature>
<feature type="binding site" evidence="1">
    <location>
        <begin position="65"/>
        <end position="67"/>
    </location>
    <ligand>
        <name>glutathione</name>
        <dbReference type="ChEBI" id="CHEBI:57925"/>
    </ligand>
</feature>
<feature type="sequence conflict" description="In Ref. 2; M84578." evidence="2" ref="2">
    <original>E</original>
    <variation>S</variation>
    <location>
        <position position="195"/>
    </location>
</feature>
<protein>
    <recommendedName>
        <fullName>Glutathione S-transferase 1-1</fullName>
        <ecNumber>2.5.1.18</ecNumber>
        <ecNumber>4.5.1.1</ecNumber>
    </recommendedName>
    <alternativeName>
        <fullName>DDT-dehydrochlorinase</fullName>
    </alternativeName>
    <alternativeName>
        <fullName>GST class-theta</fullName>
    </alternativeName>
</protein>
<name>GSTT1_DROSE</name>
<proteinExistence type="inferred from homology"/>
<gene>
    <name type="primary">GstD1</name>
    <name type="synonym">GST</name>
    <name type="synonym">Gst1</name>
    <name type="ORF">GM26019</name>
</gene>
<dbReference type="EC" id="2.5.1.18"/>
<dbReference type="EC" id="4.5.1.1"/>
<dbReference type="EMBL" id="CH480815">
    <property type="protein sequence ID" value="EDW42478.1"/>
    <property type="molecule type" value="Genomic_DNA"/>
</dbReference>
<dbReference type="EMBL" id="M84578">
    <property type="status" value="NOT_ANNOTATED_CDS"/>
    <property type="molecule type" value="Genomic_DNA"/>
</dbReference>
<dbReference type="RefSeq" id="XP_002031492.1">
    <property type="nucleotide sequence ID" value="XM_002031456.1"/>
</dbReference>
<dbReference type="SMR" id="P30106"/>
<dbReference type="STRING" id="7238.P30106"/>
<dbReference type="EnsemblMetazoa" id="FBtr0209004">
    <property type="protein sequence ID" value="FBpp0207496"/>
    <property type="gene ID" value="FBgn0012785"/>
</dbReference>
<dbReference type="EnsemblMetazoa" id="XM_002031456.2">
    <property type="protein sequence ID" value="XP_002031492.2"/>
    <property type="gene ID" value="LOC6606692"/>
</dbReference>
<dbReference type="GeneID" id="6606692"/>
<dbReference type="KEGG" id="dse:6606692"/>
<dbReference type="CTD" id="41503"/>
<dbReference type="HOGENOM" id="CLU_011226_2_1_1"/>
<dbReference type="OMA" id="ESNTICR"/>
<dbReference type="OrthoDB" id="6490010at2759"/>
<dbReference type="PhylomeDB" id="P30106"/>
<dbReference type="ChiTaRS" id="GstS1">
    <property type="organism name" value="fly"/>
</dbReference>
<dbReference type="Proteomes" id="UP000001292">
    <property type="component" value="Unassembled WGS sequence"/>
</dbReference>
<dbReference type="GO" id="GO:0018833">
    <property type="term" value="F:DDT-dehydrochlorinase activity"/>
    <property type="evidence" value="ECO:0007669"/>
    <property type="project" value="UniProtKB-EC"/>
</dbReference>
<dbReference type="GO" id="GO:0004602">
    <property type="term" value="F:glutathione peroxidase activity"/>
    <property type="evidence" value="ECO:0007669"/>
    <property type="project" value="EnsemblMetazoa"/>
</dbReference>
<dbReference type="GO" id="GO:0004364">
    <property type="term" value="F:glutathione transferase activity"/>
    <property type="evidence" value="ECO:0007669"/>
    <property type="project" value="UniProtKB-EC"/>
</dbReference>
<dbReference type="GO" id="GO:0006749">
    <property type="term" value="P:glutathione metabolic process"/>
    <property type="evidence" value="ECO:0007669"/>
    <property type="project" value="EnsemblMetazoa"/>
</dbReference>
<dbReference type="CDD" id="cd03177">
    <property type="entry name" value="GST_C_Delta_Epsilon"/>
    <property type="match status" value="1"/>
</dbReference>
<dbReference type="CDD" id="cd03045">
    <property type="entry name" value="GST_N_Delta_Epsilon"/>
    <property type="match status" value="1"/>
</dbReference>
<dbReference type="FunFam" id="3.40.30.10:FF:000034">
    <property type="entry name" value="glutathione S-transferase 1"/>
    <property type="match status" value="1"/>
</dbReference>
<dbReference type="FunFam" id="1.20.1050.10:FF:000007">
    <property type="entry name" value="Glutathione S-transferase 1-1"/>
    <property type="match status" value="1"/>
</dbReference>
<dbReference type="Gene3D" id="1.20.1050.10">
    <property type="match status" value="1"/>
</dbReference>
<dbReference type="Gene3D" id="3.40.30.10">
    <property type="entry name" value="Glutaredoxin"/>
    <property type="match status" value="1"/>
</dbReference>
<dbReference type="InterPro" id="IPR010987">
    <property type="entry name" value="Glutathione-S-Trfase_C-like"/>
</dbReference>
<dbReference type="InterPro" id="IPR036282">
    <property type="entry name" value="Glutathione-S-Trfase_C_sf"/>
</dbReference>
<dbReference type="InterPro" id="IPR040079">
    <property type="entry name" value="Glutathione_S-Trfase"/>
</dbReference>
<dbReference type="InterPro" id="IPR004045">
    <property type="entry name" value="Glutathione_S-Trfase_N"/>
</dbReference>
<dbReference type="InterPro" id="IPR004046">
    <property type="entry name" value="GST_C"/>
</dbReference>
<dbReference type="InterPro" id="IPR036249">
    <property type="entry name" value="Thioredoxin-like_sf"/>
</dbReference>
<dbReference type="PANTHER" id="PTHR43969">
    <property type="entry name" value="GLUTATHIONE S TRANSFERASE D10, ISOFORM A-RELATED"/>
    <property type="match status" value="1"/>
</dbReference>
<dbReference type="PANTHER" id="PTHR43969:SF9">
    <property type="entry name" value="GLUTATHIONE S TRANSFERASE D10, ISOFORM A-RELATED"/>
    <property type="match status" value="1"/>
</dbReference>
<dbReference type="Pfam" id="PF00043">
    <property type="entry name" value="GST_C"/>
    <property type="match status" value="1"/>
</dbReference>
<dbReference type="Pfam" id="PF02798">
    <property type="entry name" value="GST_N"/>
    <property type="match status" value="1"/>
</dbReference>
<dbReference type="SFLD" id="SFLDS00019">
    <property type="entry name" value="Glutathione_Transferase_(cytos"/>
    <property type="match status" value="1"/>
</dbReference>
<dbReference type="SFLD" id="SFLDG01153">
    <property type="entry name" value="Main.4:_Theta-like"/>
    <property type="match status" value="1"/>
</dbReference>
<dbReference type="SUPFAM" id="SSF47616">
    <property type="entry name" value="GST C-terminal domain-like"/>
    <property type="match status" value="1"/>
</dbReference>
<dbReference type="SUPFAM" id="SSF52833">
    <property type="entry name" value="Thioredoxin-like"/>
    <property type="match status" value="1"/>
</dbReference>
<dbReference type="PROSITE" id="PS50405">
    <property type="entry name" value="GST_CTER"/>
    <property type="match status" value="1"/>
</dbReference>
<dbReference type="PROSITE" id="PS50404">
    <property type="entry name" value="GST_NTER"/>
    <property type="match status" value="1"/>
</dbReference>
<keyword id="KW-0456">Lyase</keyword>
<keyword id="KW-1185">Reference proteome</keyword>
<keyword id="KW-0808">Transferase</keyword>
<accession>P30106</accession>
<accession>B4HHD9</accession>
<organism>
    <name type="scientific">Drosophila sechellia</name>
    <name type="common">Fruit fly</name>
    <dbReference type="NCBI Taxonomy" id="7238"/>
    <lineage>
        <taxon>Eukaryota</taxon>
        <taxon>Metazoa</taxon>
        <taxon>Ecdysozoa</taxon>
        <taxon>Arthropoda</taxon>
        <taxon>Hexapoda</taxon>
        <taxon>Insecta</taxon>
        <taxon>Pterygota</taxon>
        <taxon>Neoptera</taxon>
        <taxon>Endopterygota</taxon>
        <taxon>Diptera</taxon>
        <taxon>Brachycera</taxon>
        <taxon>Muscomorpha</taxon>
        <taxon>Ephydroidea</taxon>
        <taxon>Drosophilidae</taxon>
        <taxon>Drosophila</taxon>
        <taxon>Sophophora</taxon>
    </lineage>
</organism>
<reference key="1">
    <citation type="journal article" date="2007" name="Nature">
        <title>Evolution of genes and genomes on the Drosophila phylogeny.</title>
        <authorList>
            <consortium name="Drosophila 12 genomes consortium"/>
        </authorList>
    </citation>
    <scope>NUCLEOTIDE SEQUENCE [LARGE SCALE GENOMIC DNA]</scope>
    <source>
        <strain>Rob3c / Tucson 14021-0248.25</strain>
    </source>
</reference>
<reference key="2">
    <citation type="submission" date="1992-02" db="EMBL/GenBank/DDBJ databases">
        <title>Sequence divergence of glutathione S-transferase coding regions among seven species in the melanogaster subgroup of Drosophila.</title>
        <authorList>
            <person name="Hargis M.T."/>
            <person name="Cochrane B.J."/>
        </authorList>
    </citation>
    <scope>NUCLEOTIDE SEQUENCE [GENOMIC DNA] OF 9-208</scope>
</reference>
<sequence length="209" mass="23767">MADFYYLPGSSPCRSVIMTAKAVGVELNKKLLNLRAGEHLKPEFLKINPQHTIPTLVDNGFALWESRAIQVYLVEKYGKTDSLYPKCPKKRAVINQRLYFDMGTLYQSFANYYYPQVFAKAPADPEAFKKIESAFEFLNTFLEGQEYAAGDSLTVADIALVASVSTFEVAGFEISKYANVNKWYENAKKVTPGWEENWAGCLEFKKFFE</sequence>